<comment type="function">
    <text evidence="4 13 14">Myosins are actin-based motor molecules with ATPase activity. Unconventional myosins serve in intracellular movements. MYO10 binds to actin filaments and actin bundles and functions as a plus end-directed motor. Moves with higher velocity and takes larger steps on actin bundles than on single actin filaments (By similarity). The tail domain binds to membranous compartments containing phosphatidylinositol 3,4,5-trisphosphate or integrins, and mediates cargo transport along actin filaments (By similarity). Regulates cell shape, cell spreading and cell adhesion. Stimulates the formation and elongation of filopodia. In hippocampal neurons it induces the formation of dendritic filopodia by trafficking the actin-remodeling protein VASP to the tips of filopodia, where it promotes actin elongation. Plays a role in formation of the podosome belt in osteoclasts.</text>
</comment>
<comment type="function">
    <molecule>Isoform Headless</molecule>
    <text evidence="16">Functions as a dominant-negative regulator of isoform 1, suppressing its filopodia-inducing and axon outgrowth-promoting activities. In hippocampal neurons, it increases VASP retention in spine heads to induce spine formation and spine head expansion.</text>
</comment>
<comment type="subunit">
    <text evidence="1 13 14">Monomer, when in an inactive conformation in the cytosol. Homodimer in its active, membrane-bound conformation; antiparallel coiled coil-mediated dimer formation. Interacts with ECPAS. Interacts with DCC and ITGB5; the presence of DCC inhibits ITGB5 binding. Interacts with tubulin; ITGB5 or DCC binding inhibits tubulin binding. Interacts strongly with CALM3 and weakly with CALM, the CALM3 interaction is essential for function in filopodial extension and motility. Interacts with ITGB1, ITGB3 and ITGB5 (By similarity). Interacts with NEO1. Interacts with VASP.</text>
</comment>
<comment type="interaction">
    <interactant intactId="EBI-6445959">
        <id>F8VQB6</id>
    </interactant>
    <interactant intactId="EBI-40201781">
        <id>P97798-1</id>
        <label>Neo1</label>
    </interactant>
    <organismsDiffer>false</organismsDiffer>
    <experiments>2</experiments>
</comment>
<comment type="subcellular location">
    <subcellularLocation>
        <location>Cytoplasm</location>
        <location>Cytosol</location>
    </subcellularLocation>
    <subcellularLocation>
        <location evidence="1">Cell projection</location>
        <location evidence="1">Lamellipodium</location>
    </subcellularLocation>
    <subcellularLocation>
        <location evidence="1">Cell projection</location>
        <location evidence="1">Ruffle</location>
    </subcellularLocation>
    <subcellularLocation>
        <location>Cytoplasm</location>
        <location>Cytoskeleton</location>
    </subcellularLocation>
    <subcellularLocation>
        <location>Cell projection</location>
        <location>Filopodium tip</location>
    </subcellularLocation>
    <subcellularLocation>
        <location>Cytoplasm</location>
        <location>Cell cortex</location>
    </subcellularLocation>
    <subcellularLocation>
        <location>Cell projection</location>
        <location>Filopodium membrane</location>
        <topology>Peripheral membrane protein</topology>
    </subcellularLocation>
    <text evidence="1">May be in an inactive, monomeric conformation in the cytosol. Detected in cytoplasmic punctae and in cell projections. Colocalizes with actin fibers. Interacts with microtubules. Undergoes forward and rearward movements within filopodia. Interaction with membranes containing phosphatidylinositol 3,4,5-trisphosphate mediates localization at filopodium membranes (By similarity).</text>
</comment>
<comment type="alternative products">
    <event type="alternative promoter"/>
    <isoform>
        <id>F8VQB6-1</id>
        <name>1</name>
        <name>240kDa</name>
        <name>FL-myo10</name>
        <sequence type="displayed"/>
    </isoform>
    <isoform>
        <id>F8VQB6-2</id>
        <name>Headless</name>
        <name>165kDa</name>
        <name>Hdl-myo10</name>
        <sequence type="described" ref="VSP_054978"/>
    </isoform>
</comment>
<comment type="tissue specificity">
    <text evidence="11 15">Detected in brain, heart, kidney, liver, stomach, skeletal muscle, lung, testis and skin. Isoform Headless is expressed in embryonic and neuronal stem cells, and enriched in proliferating and migrating cells.</text>
</comment>
<comment type="domain">
    <text evidence="1">Interaction between the motor domain and the tail leads to an inactive, monomeric conformation. Phospholipid binding via the PH domains leads to the formation of the active, dimeric form of the protein and strongly increases actin-dependent ATPase activity and motor activity (By similarity).</text>
</comment>
<comment type="domain">
    <text evidence="1">Interacts with membranes containing phosphatidylinositol-3,4,5-trisphosphate via the PH domains.</text>
</comment>
<comment type="domain">
    <text evidence="1">IQ 3 domain mediates high-affinity calcium-dependent binding to CALM3/CLP.</text>
</comment>
<comment type="domain">
    <text evidence="3 4 12">The SAH (single alpha-helix) region is characterized by a high content of charged residues which are predicted to stabilize the alpha-helical structure by ionic bonds (PubMed:16030012). It can refold after extension suggesting an in vivo force-dependent function (By similarity). An anti-parallel coiled coil is located C-terminal to the SAH domain and mediates dimerization (By similarity).</text>
</comment>
<comment type="PTM">
    <text>The initiator methionine for isoform Headless is removed.</text>
</comment>
<comment type="miscellaneous">
    <molecule>Isoform Headless</molecule>
    <text evidence="17">Produced by alternative promoter usage.</text>
</comment>
<comment type="similarity">
    <text evidence="17">Belongs to the TRAFAC class myosin-kinesin ATPase superfamily. Myosin family.</text>
</comment>
<comment type="caution">
    <text evidence="17">Represents an unconventional myosin. This protein should not be confused with the conventional myosin-10 (MYH10).</text>
</comment>
<feature type="chain" id="PRO_0000416244" description="Unconventional myosin-X">
    <location>
        <begin position="1"/>
        <end position="2062"/>
    </location>
</feature>
<feature type="domain" description="Myosin motor" evidence="9">
    <location>
        <begin position="63"/>
        <end position="739"/>
    </location>
</feature>
<feature type="domain" description="IQ 1" evidence="6">
    <location>
        <begin position="742"/>
        <end position="771"/>
    </location>
</feature>
<feature type="domain" description="IQ 2" evidence="6">
    <location>
        <begin position="765"/>
        <end position="794"/>
    </location>
</feature>
<feature type="domain" description="IQ 3" evidence="6">
    <location>
        <begin position="788"/>
        <end position="817"/>
    </location>
</feature>
<feature type="domain" description="PH 1" evidence="7">
    <location>
        <begin position="1216"/>
        <end position="1314"/>
    </location>
</feature>
<feature type="domain" description="PH 2" evidence="7">
    <location>
        <begin position="1396"/>
        <end position="1501"/>
    </location>
</feature>
<feature type="domain" description="MyTH4" evidence="8">
    <location>
        <begin position="1551"/>
        <end position="1699"/>
    </location>
</feature>
<feature type="domain" description="FERM" evidence="5">
    <location>
        <begin position="1704"/>
        <end position="2048"/>
    </location>
</feature>
<feature type="region of interest" description="Actin-binding" evidence="9">
    <location>
        <begin position="619"/>
        <end position="641"/>
    </location>
</feature>
<feature type="region of interest" description="SAH" evidence="4">
    <location>
        <begin position="814"/>
        <end position="882"/>
    </location>
</feature>
<feature type="region of interest" description="Disordered" evidence="10">
    <location>
        <begin position="822"/>
        <end position="844"/>
    </location>
</feature>
<feature type="region of interest" description="Disordered" evidence="10">
    <location>
        <begin position="963"/>
        <end position="1047"/>
    </location>
</feature>
<feature type="region of interest" description="Disordered" evidence="10">
    <location>
        <begin position="1062"/>
        <end position="1089"/>
    </location>
</feature>
<feature type="coiled-coil region" evidence="4">
    <location>
        <begin position="883"/>
        <end position="933"/>
    </location>
</feature>
<feature type="compositionally biased region" description="Acidic residues" evidence="10">
    <location>
        <begin position="993"/>
        <end position="1007"/>
    </location>
</feature>
<feature type="compositionally biased region" description="Polar residues" evidence="10">
    <location>
        <begin position="1062"/>
        <end position="1085"/>
    </location>
</feature>
<feature type="binding site" evidence="4">
    <location>
        <position position="104"/>
    </location>
    <ligand>
        <name>ATP</name>
        <dbReference type="ChEBI" id="CHEBI:30616"/>
    </ligand>
</feature>
<feature type="binding site" evidence="4">
    <location>
        <position position="113"/>
    </location>
    <ligand>
        <name>ATP</name>
        <dbReference type="ChEBI" id="CHEBI:30616"/>
    </ligand>
</feature>
<feature type="binding site" evidence="4">
    <location>
        <begin position="160"/>
        <end position="165"/>
    </location>
    <ligand>
        <name>ATP</name>
        <dbReference type="ChEBI" id="CHEBI:30616"/>
    </ligand>
</feature>
<feature type="binding site" evidence="4">
    <location>
        <position position="215"/>
    </location>
    <ligand>
        <name>ATP</name>
        <dbReference type="ChEBI" id="CHEBI:30616"/>
    </ligand>
</feature>
<feature type="modified residue" description="N-acetylmethionine" evidence="4">
    <location>
        <position position="1"/>
    </location>
</feature>
<feature type="modified residue" description="Phosphoserine" evidence="2">
    <location>
        <position position="961"/>
    </location>
</feature>
<feature type="modified residue" description="Phosphoserine" evidence="4">
    <location>
        <position position="964"/>
    </location>
</feature>
<feature type="modified residue" description="Phosphoserine" evidence="2">
    <location>
        <position position="967"/>
    </location>
</feature>
<feature type="modified residue" description="Phosphothreonine" evidence="2">
    <location>
        <position position="1162"/>
    </location>
</feature>
<feature type="splice variant" id="VSP_054978" description="In isoform Headless." evidence="17">
    <location>
        <begin position="1"/>
        <end position="643"/>
    </location>
</feature>
<feature type="sequence conflict" description="In Ref. 1; CAB56466." evidence="17" ref="1">
    <original>GS</original>
    <variation>VA</variation>
    <location>
        <begin position="77"/>
        <end position="78"/>
    </location>
</feature>
<feature type="sequence conflict" description="In Ref. 1; CAB56466." evidence="17" ref="1">
    <original>QN</original>
    <variation>RI</variation>
    <location>
        <begin position="253"/>
        <end position="254"/>
    </location>
</feature>
<feature type="sequence conflict" description="In Ref. 1; CAB56466." evidence="17" ref="1">
    <original>G</original>
    <variation>E</variation>
    <location>
        <position position="273"/>
    </location>
</feature>
<feature type="sequence conflict" description="In Ref. 1; CAB56466." evidence="17" ref="1">
    <original>G</original>
    <variation>R</variation>
    <location>
        <position position="501"/>
    </location>
</feature>
<feature type="sequence conflict" description="In Ref. 1; CAB56466." evidence="17" ref="1">
    <original>E</original>
    <variation>A</variation>
    <location>
        <position position="870"/>
    </location>
</feature>
<feature type="sequence conflict" description="In Ref. 1; CAB56466." evidence="17" ref="1">
    <original>N</original>
    <variation>S</variation>
    <location>
        <position position="984"/>
    </location>
</feature>
<feature type="sequence conflict" description="In Ref. 1; CAB56466." evidence="17" ref="1">
    <original>A</original>
    <variation>E</variation>
    <location>
        <position position="993"/>
    </location>
</feature>
<feature type="sequence conflict" description="In Ref. 1; CAB56466." evidence="17" ref="1">
    <original>D</original>
    <variation>E</variation>
    <location>
        <position position="1032"/>
    </location>
</feature>
<feature type="sequence conflict" description="In Ref. 1; CAB56466." evidence="17" ref="1">
    <original>Y</original>
    <variation>D</variation>
    <location>
        <position position="1042"/>
    </location>
</feature>
<feature type="sequence conflict" description="In Ref. 1; CAB56466." evidence="17" ref="1">
    <original>N</original>
    <variation>P</variation>
    <location>
        <position position="1083"/>
    </location>
</feature>
<feature type="sequence conflict" description="In Ref. 1; CAB56466." evidence="17" ref="1">
    <original>D</original>
    <variation>Y</variation>
    <location>
        <position position="1371"/>
    </location>
</feature>
<feature type="sequence conflict" description="In Ref. 1; CAB56466." evidence="17" ref="1">
    <original>D</original>
    <variation>H</variation>
    <location>
        <position position="1602"/>
    </location>
</feature>
<feature type="sequence conflict" description="In Ref. 1; CAB56466." evidence="17" ref="1">
    <original>R</original>
    <variation>L</variation>
    <location>
        <position position="1647"/>
    </location>
</feature>
<feature type="sequence conflict" description="In Ref. 1; CAB56466." evidence="17" ref="1">
    <original>S</original>
    <variation>G</variation>
    <location>
        <position position="1805"/>
    </location>
</feature>
<feature type="sequence conflict" description="In Ref. 1; CAB56466." evidence="17" ref="1">
    <original>N</original>
    <variation>T</variation>
    <location>
        <position position="1939"/>
    </location>
</feature>
<feature type="sequence conflict" description="In Ref. 1; CAB56466." evidence="17" ref="1">
    <original>D</original>
    <variation>E</variation>
    <location>
        <position position="1982"/>
    </location>
</feature>
<proteinExistence type="evidence at protein level"/>
<organism>
    <name type="scientific">Mus musculus</name>
    <name type="common">Mouse</name>
    <dbReference type="NCBI Taxonomy" id="10090"/>
    <lineage>
        <taxon>Eukaryota</taxon>
        <taxon>Metazoa</taxon>
        <taxon>Chordata</taxon>
        <taxon>Craniata</taxon>
        <taxon>Vertebrata</taxon>
        <taxon>Euteleostomi</taxon>
        <taxon>Mammalia</taxon>
        <taxon>Eutheria</taxon>
        <taxon>Euarchontoglires</taxon>
        <taxon>Glires</taxon>
        <taxon>Rodentia</taxon>
        <taxon>Myomorpha</taxon>
        <taxon>Muroidea</taxon>
        <taxon>Muridae</taxon>
        <taxon>Murinae</taxon>
        <taxon>Mus</taxon>
        <taxon>Mus</taxon>
    </lineage>
</organism>
<sequence>MDSFFPEGARVWLRENGQHFPSTVNSCAEGVVVFQTDYGQVFTYKQSTITNQKVTAMHPLHEEGVDDMASLAELHGGSIMYNLFQRYKRNQIYTYIGSIIASVNPYQPIAGLYERATMEEYSRCHLGELPPHIFAIANECYRCLWKRHDNQCVLISGESGAGKTESTKLILKFLSVISQQTLDLGLQEKTSSVEQAILQSSPIMEAFGNAKTVYNNNSSRFGKFVQLNICQQGNIQGGRIVDYLLEKNRVVRQNPGERNYHIFYALLAGLDQGEREEFYLSLPENYHYLNQSGCTEDKTISDQESFRQVITAMEVMQFSKEEVREVLRLLAGILHLGNIEFITAGGAQIPFKTALGRSADLLGLDPTQLTDALTQRSMILRGEEILTPLSVQQAVDSRDSLAMALYARCFEWVIKKINSRIKGKDDFKSIGILDIFGFENFEVNHFEQFNINYANEKLQEYFNKHIFSLEQLEYSREGLVWEDIDWIDNGECLDLIEKKLGLLALINEESHFPQATDSTLLEKLHSQHANNHFYVKPRVAVNNFGVKHYAGEVQYDVRGILEKNRDTFRDDLLNLLRESRFDFIYDLFEHVSSRNNQDTLKCGSKHRRPTVSSQFKDSLHSLMATLSSSNPFFVRCIKPNTQKMPDQFDQVVVLNQLRYSGMLETVRIRKAGYAVRRPFQDFYKRYKVLMRNLALPDDIRGKCTVLLQVYDASNSEWQLGKTKVFLRESLEQKLEKRREEEIDRAAMVIRAHILGYLARKQYRKVLCGVVTIQKNYRAFLARKKFLHLKKAAIVFQKQLRGQLARRVYRQLLAEKRELEEKKRREEEKKREEEERERERAQREADLLRAHQEAETRRQQELEALQKSQREADLTRELEKQRENKQVEEILRLEKEIEDLQRMKERQELSLTEASLQKLQQLRDEELRRLEDEACRAAQEFLESLNFDEIDECVRNIERSLSVGSEISGEELSELAESASGEKPNFNFSQPYPAEEEVDEGFEADDDAFKDSPNPSEHGHSDQRTSGIRTSDDSSEEDPYMNYTVVPTSPSADSTVLLAASMQDSASLHNSSSGESTYCMPQNNGDLPSPDGDYDYDQDDYEDGAITSGSSVTFSNSYGSQWSPDYRYSVGTYNSSGAYRFSSEGAQSSFEDSEEDFDSRFDTDDELSYRRDSVYSCVTLPYFHSFLYMKGGLMNSWKRRWCVLKDETFLWFRSKQEALKQGWLHKKGGGSSTLSRRNWKKRWFVLRQSKLMYFENDSEEKLKGTVEVRTAKEIIDNTSKENGIDIILADRTFHLIAESPEDASQWFSVLSQVHSSTDQEIREMHDEQANPQNAVGTLDVGLIDSVCASDSPDRPNSFVIITANRVLHCNADTPEEMHHWITLLQRSKGDTRVEGQEFIVRGWLHKEVKNSPKMSSLKLKKRWFVLTHNSLDYYKSSEKNALKLGTLVLNSLCSVVPPDEKIFKETGYWNVTVYGRKHCYRLYTKLLNEATRWSSAIQNVTDTKAPIDTPTQQLIQDIKENCLNSDVVEQIYKRNPILRYTHHPLHSPLLPLPYGDINLNLLKDKGYTTLQDEAIKIFNSLQQLESMSDPIPIIQGILQTGHDLRPLRDELYCQLIKQTNKVPHPGSVGNLYSWQILTCLSCTFLPSRGILKYLKFHLKRIREQFPGTEMEKYALFIYESLKKTKCREFVPSRDEIEALIHRQEMTSTVYCHGGGSCKITINSHTTAGEVVEKLIRGLAMEDSRNMFALFEYNGQVDKAIESRTIVADVLAKFEKLAATSEAGDAPWKFYFKLYCFLDTDSMPKDSVEFAFMFEQAHEAVIHGHHPAPEESLQVLAALRLQYLQGDYTPHTSIPPLEEVYSVQRLRARISQSTKTFTPYERLEKRRTSFLEGTLRRSFRTGSVVRQKAEEEQMLDMWIKEEVCSARTSIIDKWKKLQGMNQEQAMAKYMALIKEWPGYGSTLFDVECKEGGFPQELWLGVSADAVSVYKRGEGKPLEVFQYEHILSFGAPLANTYKIVVDERELLFETSEVVDVAKLMKAYISMIVKKRYSTTRSVSSQGSSR</sequence>
<accession>F8VQB6</accession>
<accession>Q8R3S0</accession>
<accession>Q9JJY5</accession>
<name>MYO10_MOUSE</name>
<dbReference type="EMBL" id="AJ249706">
    <property type="protein sequence ID" value="CAB56466.2"/>
    <property type="molecule type" value="mRNA"/>
</dbReference>
<dbReference type="EMBL" id="AC115746">
    <property type="status" value="NOT_ANNOTATED_CDS"/>
    <property type="molecule type" value="Genomic_DNA"/>
</dbReference>
<dbReference type="EMBL" id="AC131178">
    <property type="status" value="NOT_ANNOTATED_CDS"/>
    <property type="molecule type" value="Genomic_DNA"/>
</dbReference>
<dbReference type="EMBL" id="BC024692">
    <property type="protein sequence ID" value="AAH24692.1"/>
    <property type="molecule type" value="mRNA"/>
</dbReference>
<dbReference type="CCDS" id="CCDS37049.1">
    <molecule id="F8VQB6-1"/>
</dbReference>
<dbReference type="PIR" id="A59297">
    <property type="entry name" value="A59297"/>
</dbReference>
<dbReference type="RefSeq" id="NP_062345.2">
    <molecule id="F8VQB6-1"/>
    <property type="nucleotide sequence ID" value="NM_019472.2"/>
</dbReference>
<dbReference type="RefSeq" id="XP_006520088.1">
    <molecule id="F8VQB6-2"/>
    <property type="nucleotide sequence ID" value="XM_006520025.5"/>
</dbReference>
<dbReference type="RefSeq" id="XP_030104228.1">
    <molecule id="F8VQB6-2"/>
    <property type="nucleotide sequence ID" value="XM_030248368.2"/>
</dbReference>
<dbReference type="RefSeq" id="XP_030104229.1">
    <molecule id="F8VQB6-2"/>
    <property type="nucleotide sequence ID" value="XM_030248369.1"/>
</dbReference>
<dbReference type="SMR" id="F8VQB6"/>
<dbReference type="BioGRID" id="201661">
    <property type="interactions" value="5"/>
</dbReference>
<dbReference type="FunCoup" id="F8VQB6">
    <property type="interactions" value="551"/>
</dbReference>
<dbReference type="IntAct" id="F8VQB6">
    <property type="interactions" value="4"/>
</dbReference>
<dbReference type="STRING" id="10090.ENSMUSP00000106087"/>
<dbReference type="iPTMnet" id="F8VQB6"/>
<dbReference type="PhosphoSitePlus" id="F8VQB6"/>
<dbReference type="jPOST" id="F8VQB6"/>
<dbReference type="PaxDb" id="10090-ENSMUSP00000106087"/>
<dbReference type="PeptideAtlas" id="F8VQB6"/>
<dbReference type="ProteomicsDB" id="293602">
    <molecule id="F8VQB6-1"/>
</dbReference>
<dbReference type="ProteomicsDB" id="293603">
    <molecule id="F8VQB6-2"/>
</dbReference>
<dbReference type="Pumba" id="F8VQB6"/>
<dbReference type="Antibodypedia" id="4455">
    <property type="antibodies" value="114 antibodies from 24 providers"/>
</dbReference>
<dbReference type="DNASU" id="17909"/>
<dbReference type="Ensembl" id="ENSMUST00000110457.8">
    <molecule id="F8VQB6-1"/>
    <property type="protein sequence ID" value="ENSMUSP00000106087.2"/>
    <property type="gene ID" value="ENSMUSG00000022272.18"/>
</dbReference>
<dbReference type="GeneID" id="17909"/>
<dbReference type="KEGG" id="mmu:17909"/>
<dbReference type="UCSC" id="uc007vjc.1">
    <molecule id="F8VQB6-1"/>
    <property type="organism name" value="mouse"/>
</dbReference>
<dbReference type="AGR" id="MGI:107716"/>
<dbReference type="CTD" id="4651"/>
<dbReference type="MGI" id="MGI:107716">
    <property type="gene designation" value="Myo10"/>
</dbReference>
<dbReference type="VEuPathDB" id="HostDB:ENSMUSG00000022272"/>
<dbReference type="eggNOG" id="KOG4229">
    <property type="taxonomic scope" value="Eukaryota"/>
</dbReference>
<dbReference type="GeneTree" id="ENSGT00940000155469"/>
<dbReference type="HOGENOM" id="CLU_001626_1_0_1"/>
<dbReference type="InParanoid" id="F8VQB6"/>
<dbReference type="OMA" id="HSEWQLG"/>
<dbReference type="OrthoDB" id="6108017at2759"/>
<dbReference type="PhylomeDB" id="F8VQB6"/>
<dbReference type="TreeFam" id="TF316834"/>
<dbReference type="Reactome" id="R-MMU-2029482">
    <property type="pathway name" value="Regulation of actin dynamics for phagocytic cup formation"/>
</dbReference>
<dbReference type="BioGRID-ORCS" id="17909">
    <property type="hits" value="3 hits in 79 CRISPR screens"/>
</dbReference>
<dbReference type="ChiTaRS" id="Myo10">
    <property type="organism name" value="mouse"/>
</dbReference>
<dbReference type="PRO" id="PR:F8VQB6"/>
<dbReference type="Proteomes" id="UP000000589">
    <property type="component" value="Chromosome 15"/>
</dbReference>
<dbReference type="RNAct" id="F8VQB6">
    <property type="molecule type" value="protein"/>
</dbReference>
<dbReference type="Bgee" id="ENSMUSG00000022272">
    <property type="expression patterns" value="Expressed in floor plate of midbrain and 271 other cell types or tissues"/>
</dbReference>
<dbReference type="ExpressionAtlas" id="F8VQB6">
    <property type="expression patterns" value="baseline and differential"/>
</dbReference>
<dbReference type="GO" id="GO:0005938">
    <property type="term" value="C:cell cortex"/>
    <property type="evidence" value="ECO:0007669"/>
    <property type="project" value="UniProtKB-SubCell"/>
</dbReference>
<dbReference type="GO" id="GO:0005829">
    <property type="term" value="C:cytosol"/>
    <property type="evidence" value="ECO:0007669"/>
    <property type="project" value="UniProtKB-SubCell"/>
</dbReference>
<dbReference type="GO" id="GO:0030175">
    <property type="term" value="C:filopodium"/>
    <property type="evidence" value="ECO:0000314"/>
    <property type="project" value="MGI"/>
</dbReference>
<dbReference type="GO" id="GO:0031527">
    <property type="term" value="C:filopodium membrane"/>
    <property type="evidence" value="ECO:0007669"/>
    <property type="project" value="UniProtKB-SubCell"/>
</dbReference>
<dbReference type="GO" id="GO:0032433">
    <property type="term" value="C:filopodium tip"/>
    <property type="evidence" value="ECO:0000250"/>
    <property type="project" value="UniProtKB"/>
</dbReference>
<dbReference type="GO" id="GO:0030027">
    <property type="term" value="C:lamellipodium"/>
    <property type="evidence" value="ECO:0000266"/>
    <property type="project" value="MGI"/>
</dbReference>
<dbReference type="GO" id="GO:0016459">
    <property type="term" value="C:myosin complex"/>
    <property type="evidence" value="ECO:0007669"/>
    <property type="project" value="UniProtKB-KW"/>
</dbReference>
<dbReference type="GO" id="GO:0043005">
    <property type="term" value="C:neuron projection"/>
    <property type="evidence" value="ECO:0000314"/>
    <property type="project" value="MGI"/>
</dbReference>
<dbReference type="GO" id="GO:0043025">
    <property type="term" value="C:neuronal cell body"/>
    <property type="evidence" value="ECO:0000314"/>
    <property type="project" value="MGI"/>
</dbReference>
<dbReference type="GO" id="GO:0005730">
    <property type="term" value="C:nucleolus"/>
    <property type="evidence" value="ECO:0007669"/>
    <property type="project" value="Ensembl"/>
</dbReference>
<dbReference type="GO" id="GO:0001726">
    <property type="term" value="C:ruffle"/>
    <property type="evidence" value="ECO:0000266"/>
    <property type="project" value="MGI"/>
</dbReference>
<dbReference type="GO" id="GO:0051015">
    <property type="term" value="F:actin filament binding"/>
    <property type="evidence" value="ECO:0000250"/>
    <property type="project" value="UniProtKB"/>
</dbReference>
<dbReference type="GO" id="GO:0005524">
    <property type="term" value="F:ATP binding"/>
    <property type="evidence" value="ECO:0007669"/>
    <property type="project" value="UniProtKB-KW"/>
</dbReference>
<dbReference type="GO" id="GO:0005516">
    <property type="term" value="F:calmodulin binding"/>
    <property type="evidence" value="ECO:0007669"/>
    <property type="project" value="UniProtKB-KW"/>
</dbReference>
<dbReference type="GO" id="GO:0000146">
    <property type="term" value="F:microfilament motor activity"/>
    <property type="evidence" value="ECO:0000250"/>
    <property type="project" value="UniProtKB"/>
</dbReference>
<dbReference type="GO" id="GO:0005547">
    <property type="term" value="F:phosphatidylinositol-3,4,5-trisphosphate binding"/>
    <property type="evidence" value="ECO:0000250"/>
    <property type="project" value="UniProtKB"/>
</dbReference>
<dbReference type="GO" id="GO:0060002">
    <property type="term" value="F:plus-end directed microfilament motor activity"/>
    <property type="evidence" value="ECO:0000250"/>
    <property type="project" value="UniProtKB"/>
</dbReference>
<dbReference type="GO" id="GO:0030507">
    <property type="term" value="F:spectrin binding"/>
    <property type="evidence" value="ECO:0000266"/>
    <property type="project" value="MGI"/>
</dbReference>
<dbReference type="GO" id="GO:0048870">
    <property type="term" value="P:cell motility"/>
    <property type="evidence" value="ECO:0000305"/>
    <property type="project" value="MGI"/>
</dbReference>
<dbReference type="GO" id="GO:0030705">
    <property type="term" value="P:cytoskeleton-dependent intracellular transport"/>
    <property type="evidence" value="ECO:0000250"/>
    <property type="project" value="UniProtKB"/>
</dbReference>
<dbReference type="GO" id="GO:0022409">
    <property type="term" value="P:positive regulation of cell-cell adhesion"/>
    <property type="evidence" value="ECO:0000316"/>
    <property type="project" value="MGI"/>
</dbReference>
<dbReference type="GO" id="GO:0008360">
    <property type="term" value="P:regulation of cell shape"/>
    <property type="evidence" value="ECO:0000250"/>
    <property type="project" value="UniProtKB"/>
</dbReference>
<dbReference type="GO" id="GO:0051489">
    <property type="term" value="P:regulation of filopodium assembly"/>
    <property type="evidence" value="ECO:0000250"/>
    <property type="project" value="UniProtKB"/>
</dbReference>
<dbReference type="CDD" id="cd14473">
    <property type="entry name" value="FERM_B-lobe"/>
    <property type="match status" value="1"/>
</dbReference>
<dbReference type="CDD" id="cd13202">
    <property type="entry name" value="FERM_C_MyoX"/>
    <property type="match status" value="1"/>
</dbReference>
<dbReference type="CDD" id="cd17206">
    <property type="entry name" value="FERM_F1_Myosin-X"/>
    <property type="match status" value="1"/>
</dbReference>
<dbReference type="CDD" id="cd14873">
    <property type="entry name" value="MYSc_Myo10"/>
    <property type="match status" value="1"/>
</dbReference>
<dbReference type="CDD" id="cd13296">
    <property type="entry name" value="PH2_MyoX"/>
    <property type="match status" value="1"/>
</dbReference>
<dbReference type="CDD" id="cd13297">
    <property type="entry name" value="PH3_MyoX-like"/>
    <property type="match status" value="1"/>
</dbReference>
<dbReference type="FunFam" id="1.10.10.820:FF:000001">
    <property type="entry name" value="Myosin heavy chain"/>
    <property type="match status" value="1"/>
</dbReference>
<dbReference type="FunFam" id="2.30.29.30:FF:000286">
    <property type="entry name" value="PH-protein kinase domain containing protein"/>
    <property type="match status" value="1"/>
</dbReference>
<dbReference type="FunFam" id="1.25.40.530:FF:000001">
    <property type="entry name" value="Pleckstrin homology domain-containing family H member 2"/>
    <property type="match status" value="1"/>
</dbReference>
<dbReference type="FunFam" id="3.40.850.10:FF:000008">
    <property type="entry name" value="Putative unconventional myosin-IXa"/>
    <property type="match status" value="1"/>
</dbReference>
<dbReference type="FunFam" id="1.20.80.10:FF:000020">
    <property type="entry name" value="Unconventional myosin-X"/>
    <property type="match status" value="1"/>
</dbReference>
<dbReference type="FunFam" id="2.30.29.30:FF:000195">
    <property type="entry name" value="Unconventional myosin-X"/>
    <property type="match status" value="1"/>
</dbReference>
<dbReference type="FunFam" id="2.30.29.30:FF:000196">
    <property type="entry name" value="unconventional myosin-X"/>
    <property type="match status" value="1"/>
</dbReference>
<dbReference type="FunFam" id="3.10.20.90:FF:000126">
    <property type="entry name" value="unconventional myosin-X"/>
    <property type="match status" value="1"/>
</dbReference>
<dbReference type="Gene3D" id="1.10.10.820">
    <property type="match status" value="1"/>
</dbReference>
<dbReference type="Gene3D" id="1.20.5.170">
    <property type="match status" value="1"/>
</dbReference>
<dbReference type="Gene3D" id="1.20.5.190">
    <property type="match status" value="1"/>
</dbReference>
<dbReference type="Gene3D" id="1.20.58.530">
    <property type="match status" value="1"/>
</dbReference>
<dbReference type="Gene3D" id="1.20.80.10">
    <property type="match status" value="1"/>
</dbReference>
<dbReference type="Gene3D" id="6.20.240.20">
    <property type="match status" value="1"/>
</dbReference>
<dbReference type="Gene3D" id="3.40.850.10">
    <property type="entry name" value="Kinesin motor domain"/>
    <property type="match status" value="1"/>
</dbReference>
<dbReference type="Gene3D" id="1.20.120.720">
    <property type="entry name" value="Myosin VI head, motor domain, U50 subdomain"/>
    <property type="match status" value="1"/>
</dbReference>
<dbReference type="Gene3D" id="1.25.40.530">
    <property type="entry name" value="MyTH4 domain"/>
    <property type="match status" value="1"/>
</dbReference>
<dbReference type="Gene3D" id="3.10.20.90">
    <property type="entry name" value="Phosphatidylinositol 3-kinase Catalytic Subunit, Chain A, domain 1"/>
    <property type="match status" value="1"/>
</dbReference>
<dbReference type="Gene3D" id="2.30.29.30">
    <property type="entry name" value="Pleckstrin-homology domain (PH domain)/Phosphotyrosine-binding domain (PTB)"/>
    <property type="match status" value="4"/>
</dbReference>
<dbReference type="InterPro" id="IPR051724">
    <property type="entry name" value="Actin_motor_Myosin"/>
</dbReference>
<dbReference type="InterPro" id="IPR019749">
    <property type="entry name" value="Band_41_domain"/>
</dbReference>
<dbReference type="InterPro" id="IPR014352">
    <property type="entry name" value="FERM/acyl-CoA-bd_prot_sf"/>
</dbReference>
<dbReference type="InterPro" id="IPR035963">
    <property type="entry name" value="FERM_2"/>
</dbReference>
<dbReference type="InterPro" id="IPR019748">
    <property type="entry name" value="FERM_central"/>
</dbReference>
<dbReference type="InterPro" id="IPR000299">
    <property type="entry name" value="FERM_domain"/>
</dbReference>
<dbReference type="InterPro" id="IPR000048">
    <property type="entry name" value="IQ_motif_EF-hand-BS"/>
</dbReference>
<dbReference type="InterPro" id="IPR036961">
    <property type="entry name" value="Kinesin_motor_dom_sf"/>
</dbReference>
<dbReference type="InterPro" id="IPR031971">
    <property type="entry name" value="MYO10_CC"/>
</dbReference>
<dbReference type="InterPro" id="IPR001609">
    <property type="entry name" value="Myosin_head_motor_dom-like"/>
</dbReference>
<dbReference type="InterPro" id="IPR041797">
    <property type="entry name" value="MyoX_FERM_C"/>
</dbReference>
<dbReference type="InterPro" id="IPR040640">
    <property type="entry name" value="MyoX_N_SH3"/>
</dbReference>
<dbReference type="InterPro" id="IPR036124">
    <property type="entry name" value="MYSc_Myo10"/>
</dbReference>
<dbReference type="InterPro" id="IPR000857">
    <property type="entry name" value="MyTH4_dom"/>
</dbReference>
<dbReference type="InterPro" id="IPR038185">
    <property type="entry name" value="MyTH4_dom_sf"/>
</dbReference>
<dbReference type="InterPro" id="IPR027417">
    <property type="entry name" value="P-loop_NTPase"/>
</dbReference>
<dbReference type="InterPro" id="IPR011993">
    <property type="entry name" value="PH-like_dom_sf"/>
</dbReference>
<dbReference type="InterPro" id="IPR001849">
    <property type="entry name" value="PH_domain"/>
</dbReference>
<dbReference type="PANTHER" id="PTHR46049">
    <property type="entry name" value="AGAP003327-PA"/>
    <property type="match status" value="1"/>
</dbReference>
<dbReference type="PANTHER" id="PTHR46049:SF2">
    <property type="entry name" value="UNCONVENTIONAL MYOSIN-X"/>
    <property type="match status" value="1"/>
</dbReference>
<dbReference type="Pfam" id="PF00373">
    <property type="entry name" value="FERM_M"/>
    <property type="match status" value="1"/>
</dbReference>
<dbReference type="Pfam" id="PF00612">
    <property type="entry name" value="IQ"/>
    <property type="match status" value="3"/>
</dbReference>
<dbReference type="Pfam" id="PF16735">
    <property type="entry name" value="MYO10_CC"/>
    <property type="match status" value="1"/>
</dbReference>
<dbReference type="Pfam" id="PF00063">
    <property type="entry name" value="Myosin_head"/>
    <property type="match status" value="1"/>
</dbReference>
<dbReference type="Pfam" id="PF00784">
    <property type="entry name" value="MyTH4"/>
    <property type="match status" value="1"/>
</dbReference>
<dbReference type="Pfam" id="PF00169">
    <property type="entry name" value="PH"/>
    <property type="match status" value="2"/>
</dbReference>
<dbReference type="Pfam" id="PF21989">
    <property type="entry name" value="RA_2"/>
    <property type="match status" value="1"/>
</dbReference>
<dbReference type="Pfam" id="PF18597">
    <property type="entry name" value="SH3_19"/>
    <property type="match status" value="1"/>
</dbReference>
<dbReference type="PRINTS" id="PR00193">
    <property type="entry name" value="MYOSINHEAVY"/>
</dbReference>
<dbReference type="SMART" id="SM00295">
    <property type="entry name" value="B41"/>
    <property type="match status" value="1"/>
</dbReference>
<dbReference type="SMART" id="SM00015">
    <property type="entry name" value="IQ"/>
    <property type="match status" value="3"/>
</dbReference>
<dbReference type="SMART" id="SM00242">
    <property type="entry name" value="MYSc"/>
    <property type="match status" value="1"/>
</dbReference>
<dbReference type="SMART" id="SM00139">
    <property type="entry name" value="MyTH4"/>
    <property type="match status" value="1"/>
</dbReference>
<dbReference type="SMART" id="SM00233">
    <property type="entry name" value="PH"/>
    <property type="match status" value="2"/>
</dbReference>
<dbReference type="SUPFAM" id="SSF52540">
    <property type="entry name" value="P-loop containing nucleoside triphosphate hydrolases"/>
    <property type="match status" value="1"/>
</dbReference>
<dbReference type="SUPFAM" id="SSF50729">
    <property type="entry name" value="PH domain-like"/>
    <property type="match status" value="4"/>
</dbReference>
<dbReference type="SUPFAM" id="SSF47031">
    <property type="entry name" value="Second domain of FERM"/>
    <property type="match status" value="1"/>
</dbReference>
<dbReference type="PROSITE" id="PS50057">
    <property type="entry name" value="FERM_3"/>
    <property type="match status" value="1"/>
</dbReference>
<dbReference type="PROSITE" id="PS50096">
    <property type="entry name" value="IQ"/>
    <property type="match status" value="3"/>
</dbReference>
<dbReference type="PROSITE" id="PS51456">
    <property type="entry name" value="MYOSIN_MOTOR"/>
    <property type="match status" value="1"/>
</dbReference>
<dbReference type="PROSITE" id="PS51016">
    <property type="entry name" value="MYTH4"/>
    <property type="match status" value="1"/>
</dbReference>
<dbReference type="PROSITE" id="PS50003">
    <property type="entry name" value="PH_DOMAIN"/>
    <property type="match status" value="2"/>
</dbReference>
<reference key="1">
    <citation type="journal article" date="2000" name="Biochem. Biophys. Res. Commun.">
        <title>Mouse myosin X: molecular architecture and tissue expression as revealed by northern blot and in situ hybridization analyses.</title>
        <authorList>
            <person name="Yonezawa S."/>
            <person name="Kimura A."/>
            <person name="Koshiba S."/>
            <person name="Masaki S."/>
            <person name="Ono T."/>
            <person name="Hanai A."/>
            <person name="Sonta S."/>
            <person name="Kageyama T."/>
            <person name="Takahashi T."/>
            <person name="Moriyama A."/>
        </authorList>
    </citation>
    <scope>NUCLEOTIDE SEQUENCE [MRNA]</scope>
    <scope>TISSUE SPECIFICITY</scope>
    <source>
        <strain>BALB/cJ</strain>
    </source>
</reference>
<reference key="2">
    <citation type="journal article" date="2009" name="PLoS Biol.">
        <title>Lineage-specific biology revealed by a finished genome assembly of the mouse.</title>
        <authorList>
            <person name="Church D.M."/>
            <person name="Goodstadt L."/>
            <person name="Hillier L.W."/>
            <person name="Zody M.C."/>
            <person name="Goldstein S."/>
            <person name="She X."/>
            <person name="Bult C.J."/>
            <person name="Agarwala R."/>
            <person name="Cherry J.L."/>
            <person name="DiCuccio M."/>
            <person name="Hlavina W."/>
            <person name="Kapustin Y."/>
            <person name="Meric P."/>
            <person name="Maglott D."/>
            <person name="Birtle Z."/>
            <person name="Marques A.C."/>
            <person name="Graves T."/>
            <person name="Zhou S."/>
            <person name="Teague B."/>
            <person name="Potamousis K."/>
            <person name="Churas C."/>
            <person name="Place M."/>
            <person name="Herschleb J."/>
            <person name="Runnheim R."/>
            <person name="Forrest D."/>
            <person name="Amos-Landgraf J."/>
            <person name="Schwartz D.C."/>
            <person name="Cheng Z."/>
            <person name="Lindblad-Toh K."/>
            <person name="Eichler E.E."/>
            <person name="Ponting C.P."/>
        </authorList>
    </citation>
    <scope>NUCLEOTIDE SEQUENCE [LARGE SCALE GENOMIC DNA]</scope>
    <source>
        <strain>C57BL/6J</strain>
    </source>
</reference>
<reference key="3">
    <citation type="journal article" date="2012" name="J. Biol. Chem.">
        <title>Headless Myo10 is a negative regulator of full-length Myo10 and inhibits axon outgrowth in cortical neurons.</title>
        <authorList>
            <person name="Raines A.N."/>
            <person name="Nagdas S."/>
            <person name="Kerber M.L."/>
            <person name="Cheney R.E."/>
        </authorList>
    </citation>
    <scope>PROTEIN SEQUENCE OF 2-15 (ISOFORM HEADLESS)</scope>
    <scope>FUNCTION (ISOFORM HEADLESS)</scope>
    <scope>REMOVAL OF INITIAL METHIONINE (ISOFORM HEADLESS)</scope>
    <scope>ALTERNATIVE PROMOTER USAGE</scope>
    <scope>TISSUE SPECIFICITY</scope>
</reference>
<reference key="4">
    <citation type="journal article" date="2004" name="Genome Res.">
        <title>The status, quality, and expansion of the NIH full-length cDNA project: the Mammalian Gene Collection (MGC).</title>
        <authorList>
            <consortium name="The MGC Project Team"/>
        </authorList>
    </citation>
    <scope>NUCLEOTIDE SEQUENCE [LARGE SCALE MRNA] OF 1139-2062</scope>
    <source>
        <strain>FVB/N</strain>
        <tissue>Mammary tumor</tissue>
    </source>
</reference>
<reference key="5">
    <citation type="journal article" date="2005" name="J. Biol. Chem.">
        <title>The predicted coiled-coil domain of myosin 10 forms a novel elongated domain that lengthens the head.</title>
        <authorList>
            <person name="Knight P.J."/>
            <person name="Thirumurugan K."/>
            <person name="Xu Y."/>
            <person name="Wang F."/>
            <person name="Kalverda A.P."/>
            <person name="Stafford W.F. III"/>
            <person name="Sellers J.R."/>
            <person name="Peckham M."/>
        </authorList>
    </citation>
    <scope>SAH DOMAIN</scope>
</reference>
<reference key="6">
    <citation type="journal article" date="2007" name="Nat. Cell Biol.">
        <title>Myosin X regulates netrin receptors and functions in axonal path-finding.</title>
        <authorList>
            <person name="Zhu X.J."/>
            <person name="Wang C.Z."/>
            <person name="Dai P.G."/>
            <person name="Xie Y."/>
            <person name="Song N.N."/>
            <person name="Liu Y."/>
            <person name="Du Q.S."/>
            <person name="Mei L."/>
            <person name="Ding Y.Q."/>
            <person name="Xiong W.C."/>
        </authorList>
    </citation>
    <scope>FUNCTION</scope>
    <scope>INTERACTION WITH DCC AND NEO1</scope>
    <scope>SUBCELLULAR LOCATION</scope>
</reference>
<reference key="7">
    <citation type="journal article" date="2010" name="Cell">
        <title>A tissue-specific atlas of mouse protein phosphorylation and expression.</title>
        <authorList>
            <person name="Huttlin E.L."/>
            <person name="Jedrychowski M.P."/>
            <person name="Elias J.E."/>
            <person name="Goswami T."/>
            <person name="Rad R."/>
            <person name="Beausoleil S.A."/>
            <person name="Villen J."/>
            <person name="Haas W."/>
            <person name="Sowa M.E."/>
            <person name="Gygi S.P."/>
        </authorList>
    </citation>
    <scope>IDENTIFICATION BY MASS SPECTROMETRY [LARGE SCALE ANALYSIS]</scope>
    <source>
        <tissue>Lung</tissue>
        <tissue>Pancreas</tissue>
    </source>
</reference>
<reference key="8">
    <citation type="journal article" date="2010" name="J. Biol. Chem.">
        <title>Myosin X regulates sealing zone patterning in osteoclasts through linkage of podosomes and microtubules.</title>
        <authorList>
            <person name="McMichael B.K."/>
            <person name="Cheney R.E."/>
            <person name="Lee B.S."/>
        </authorList>
    </citation>
    <scope>FUNCTION</scope>
    <scope>INTERACTION WITH TUBULIN</scope>
    <scope>SUBCELLULAR LOCATION</scope>
</reference>
<reference key="9">
    <citation type="journal article" date="2013" name="J. Cell Sci.">
        <title>Myosin X and its motorless isoform differentially modulate dendritic spine development by regulating trafficking and retention of vasodilator-stimulated phosphoprotein.</title>
        <authorList>
            <person name="Lin W.H."/>
            <person name="Hurley J.T."/>
            <person name="Raines A.N."/>
            <person name="Cheney R.E."/>
            <person name="Webb D.J."/>
        </authorList>
    </citation>
    <scope>FUNCTION (ISOFORMS 1 AND HEADLESS)</scope>
    <scope>SUBCELLULAR LOCATION</scope>
</reference>
<evidence type="ECO:0000250" key="1"/>
<evidence type="ECO:0000250" key="2">
    <source>
        <dbReference type="UniProtKB" id="D3ZJP6"/>
    </source>
</evidence>
<evidence type="ECO:0000250" key="3">
    <source>
        <dbReference type="UniProtKB" id="P79114"/>
    </source>
</evidence>
<evidence type="ECO:0000250" key="4">
    <source>
        <dbReference type="UniProtKB" id="Q9HD67"/>
    </source>
</evidence>
<evidence type="ECO:0000255" key="5">
    <source>
        <dbReference type="PROSITE-ProRule" id="PRU00084"/>
    </source>
</evidence>
<evidence type="ECO:0000255" key="6">
    <source>
        <dbReference type="PROSITE-ProRule" id="PRU00116"/>
    </source>
</evidence>
<evidence type="ECO:0000255" key="7">
    <source>
        <dbReference type="PROSITE-ProRule" id="PRU00145"/>
    </source>
</evidence>
<evidence type="ECO:0000255" key="8">
    <source>
        <dbReference type="PROSITE-ProRule" id="PRU00359"/>
    </source>
</evidence>
<evidence type="ECO:0000255" key="9">
    <source>
        <dbReference type="PROSITE-ProRule" id="PRU00782"/>
    </source>
</evidence>
<evidence type="ECO:0000256" key="10">
    <source>
        <dbReference type="SAM" id="MobiDB-lite"/>
    </source>
</evidence>
<evidence type="ECO:0000269" key="11">
    <source>
    </source>
</evidence>
<evidence type="ECO:0000269" key="12">
    <source>
    </source>
</evidence>
<evidence type="ECO:0000269" key="13">
    <source>
    </source>
</evidence>
<evidence type="ECO:0000269" key="14">
    <source>
    </source>
</evidence>
<evidence type="ECO:0000269" key="15">
    <source>
    </source>
</evidence>
<evidence type="ECO:0000269" key="16">
    <source>
    </source>
</evidence>
<evidence type="ECO:0000305" key="17"/>
<protein>
    <recommendedName>
        <fullName>Unconventional myosin-X</fullName>
    </recommendedName>
    <alternativeName>
        <fullName>Unconventional myosin-10</fullName>
    </alternativeName>
</protein>
<keyword id="KW-0007">Acetylation</keyword>
<keyword id="KW-0009">Actin-binding</keyword>
<keyword id="KW-0877">Alternative promoter usage</keyword>
<keyword id="KW-0067">ATP-binding</keyword>
<keyword id="KW-0112">Calmodulin-binding</keyword>
<keyword id="KW-1003">Cell membrane</keyword>
<keyword id="KW-0966">Cell projection</keyword>
<keyword id="KW-0175">Coiled coil</keyword>
<keyword id="KW-0963">Cytoplasm</keyword>
<keyword id="KW-0206">Cytoskeleton</keyword>
<keyword id="KW-0903">Direct protein sequencing</keyword>
<keyword id="KW-0472">Membrane</keyword>
<keyword id="KW-0505">Motor protein</keyword>
<keyword id="KW-0518">Myosin</keyword>
<keyword id="KW-0547">Nucleotide-binding</keyword>
<keyword id="KW-0597">Phosphoprotein</keyword>
<keyword id="KW-1185">Reference proteome</keyword>
<keyword id="KW-0677">Repeat</keyword>
<keyword id="KW-0813">Transport</keyword>
<gene>
    <name type="primary">Myo10</name>
</gene>